<keyword id="KW-0131">Cell cycle</keyword>
<keyword id="KW-0132">Cell division</keyword>
<keyword id="KW-0997">Cell inner membrane</keyword>
<keyword id="KW-1003">Cell membrane</keyword>
<keyword id="KW-0472">Membrane</keyword>
<keyword id="KW-1185">Reference proteome</keyword>
<keyword id="KW-0812">Transmembrane</keyword>
<keyword id="KW-1133">Transmembrane helix</keyword>
<name>ZIPA_ECO24</name>
<reference key="1">
    <citation type="journal article" date="2008" name="J. Bacteriol.">
        <title>The pangenome structure of Escherichia coli: comparative genomic analysis of E. coli commensal and pathogenic isolates.</title>
        <authorList>
            <person name="Rasko D.A."/>
            <person name="Rosovitz M.J."/>
            <person name="Myers G.S.A."/>
            <person name="Mongodin E.F."/>
            <person name="Fricke W.F."/>
            <person name="Gajer P."/>
            <person name="Crabtree J."/>
            <person name="Sebaihia M."/>
            <person name="Thomson N.R."/>
            <person name="Chaudhuri R."/>
            <person name="Henderson I.R."/>
            <person name="Sperandio V."/>
            <person name="Ravel J."/>
        </authorList>
    </citation>
    <scope>NUCLEOTIDE SEQUENCE [LARGE SCALE GENOMIC DNA]</scope>
    <source>
        <strain>E24377A / ETEC</strain>
    </source>
</reference>
<protein>
    <recommendedName>
        <fullName evidence="1">Cell division protein ZipA</fullName>
    </recommendedName>
</protein>
<dbReference type="EMBL" id="CP000800">
    <property type="protein sequence ID" value="ABV18548.1"/>
    <property type="molecule type" value="Genomic_DNA"/>
</dbReference>
<dbReference type="RefSeq" id="WP_012138926.1">
    <property type="nucleotide sequence ID" value="NC_009801.1"/>
</dbReference>
<dbReference type="BMRB" id="A7ZPL3"/>
<dbReference type="SMR" id="A7ZPL3"/>
<dbReference type="KEGG" id="ecw:EcE24377A_2699"/>
<dbReference type="HOGENOM" id="CLU_030174_1_0_6"/>
<dbReference type="Proteomes" id="UP000001122">
    <property type="component" value="Chromosome"/>
</dbReference>
<dbReference type="GO" id="GO:0032153">
    <property type="term" value="C:cell division site"/>
    <property type="evidence" value="ECO:0007669"/>
    <property type="project" value="UniProtKB-UniRule"/>
</dbReference>
<dbReference type="GO" id="GO:0005886">
    <property type="term" value="C:plasma membrane"/>
    <property type="evidence" value="ECO:0007669"/>
    <property type="project" value="UniProtKB-SubCell"/>
</dbReference>
<dbReference type="GO" id="GO:0000917">
    <property type="term" value="P:division septum assembly"/>
    <property type="evidence" value="ECO:0007669"/>
    <property type="project" value="TreeGrafter"/>
</dbReference>
<dbReference type="GO" id="GO:0043093">
    <property type="term" value="P:FtsZ-dependent cytokinesis"/>
    <property type="evidence" value="ECO:0007669"/>
    <property type="project" value="UniProtKB-UniRule"/>
</dbReference>
<dbReference type="CDD" id="cd00231">
    <property type="entry name" value="ZipA"/>
    <property type="match status" value="1"/>
</dbReference>
<dbReference type="FunFam" id="3.30.1400.10:FF:000001">
    <property type="entry name" value="Cell division protein ZipA"/>
    <property type="match status" value="1"/>
</dbReference>
<dbReference type="Gene3D" id="3.30.1400.10">
    <property type="entry name" value="ZipA, C-terminal FtsZ-binding domain"/>
    <property type="match status" value="1"/>
</dbReference>
<dbReference type="HAMAP" id="MF_00509">
    <property type="entry name" value="ZipA"/>
    <property type="match status" value="1"/>
</dbReference>
<dbReference type="InterPro" id="IPR011919">
    <property type="entry name" value="Cell_div_ZipA"/>
</dbReference>
<dbReference type="InterPro" id="IPR007449">
    <property type="entry name" value="ZipA_FtsZ-bd_C"/>
</dbReference>
<dbReference type="InterPro" id="IPR036765">
    <property type="entry name" value="ZipA_FtsZ-bd_C_sf"/>
</dbReference>
<dbReference type="NCBIfam" id="TIGR02205">
    <property type="entry name" value="septum_zipA"/>
    <property type="match status" value="1"/>
</dbReference>
<dbReference type="PANTHER" id="PTHR38685">
    <property type="entry name" value="CELL DIVISION PROTEIN ZIPA"/>
    <property type="match status" value="1"/>
</dbReference>
<dbReference type="PANTHER" id="PTHR38685:SF1">
    <property type="entry name" value="CELL DIVISION PROTEIN ZIPA"/>
    <property type="match status" value="1"/>
</dbReference>
<dbReference type="Pfam" id="PF04354">
    <property type="entry name" value="ZipA_C"/>
    <property type="match status" value="1"/>
</dbReference>
<dbReference type="SMART" id="SM00771">
    <property type="entry name" value="ZipA_C"/>
    <property type="match status" value="1"/>
</dbReference>
<dbReference type="SUPFAM" id="SSF64383">
    <property type="entry name" value="Cell-division protein ZipA, C-terminal domain"/>
    <property type="match status" value="1"/>
</dbReference>
<sequence length="328" mass="36528">MMQDLRLILIIVGAIAIIAFLVHGFWTSRKERSSMFRDRPLKRMKSKRDDDSYDEDVEDDEGVGEVRVHRVNHAPANAQEHEAARPSPQHQYQPPYASAQPRQPVQQPPEAQVPPQHAPRPAQPVQQPAYQPQPEQPLQQPVSPQVAPAPQPVHSAPQPAQQAFQPAEPVAAPQPEPVAEPAPVMDKPKRKEAVIIMNVAAHHGSELNGELLLNSIQQAGFIFGDMNIYHRHLSPDGSGPALFSLANMVKPGTFDPEMKDFTTPGVTIFMQVPSYGDELQNFKLMLQSAQHIADEVGGVVLDDQRRMMTPQKLREYQDIIREVKDANA</sequence>
<organism>
    <name type="scientific">Escherichia coli O139:H28 (strain E24377A / ETEC)</name>
    <dbReference type="NCBI Taxonomy" id="331111"/>
    <lineage>
        <taxon>Bacteria</taxon>
        <taxon>Pseudomonadati</taxon>
        <taxon>Pseudomonadota</taxon>
        <taxon>Gammaproteobacteria</taxon>
        <taxon>Enterobacterales</taxon>
        <taxon>Enterobacteriaceae</taxon>
        <taxon>Escherichia</taxon>
    </lineage>
</organism>
<evidence type="ECO:0000255" key="1">
    <source>
        <dbReference type="HAMAP-Rule" id="MF_00509"/>
    </source>
</evidence>
<evidence type="ECO:0000256" key="2">
    <source>
        <dbReference type="SAM" id="MobiDB-lite"/>
    </source>
</evidence>
<gene>
    <name evidence="1" type="primary">zipA</name>
    <name type="ordered locus">EcE24377A_2699</name>
</gene>
<comment type="function">
    <text evidence="1">Essential cell division protein that stabilizes the FtsZ protofilaments by cross-linking them and that serves as a cytoplasmic membrane anchor for the Z ring. Also required for the recruitment to the septal ring of downstream cell division proteins.</text>
</comment>
<comment type="subunit">
    <text evidence="1">Interacts with FtsZ via their C-terminal domains.</text>
</comment>
<comment type="subcellular location">
    <subcellularLocation>
        <location evidence="1">Cell inner membrane</location>
        <topology evidence="1">Single-pass type I membrane protein</topology>
    </subcellularLocation>
    <text evidence="1">Localizes to the Z ring in an FtsZ-dependent manner.</text>
</comment>
<comment type="similarity">
    <text evidence="1">Belongs to the ZipA family.</text>
</comment>
<proteinExistence type="inferred from homology"/>
<feature type="chain" id="PRO_1000060866" description="Cell division protein ZipA">
    <location>
        <begin position="1"/>
        <end position="328"/>
    </location>
</feature>
<feature type="topological domain" description="Periplasmic" evidence="1">
    <location>
        <begin position="1"/>
        <end position="6"/>
    </location>
</feature>
<feature type="transmembrane region" description="Helical" evidence="1">
    <location>
        <begin position="7"/>
        <end position="27"/>
    </location>
</feature>
<feature type="topological domain" description="Cytoplasmic" evidence="1">
    <location>
        <begin position="28"/>
        <end position="328"/>
    </location>
</feature>
<feature type="region of interest" description="Disordered" evidence="2">
    <location>
        <begin position="42"/>
        <end position="186"/>
    </location>
</feature>
<feature type="compositionally biased region" description="Acidic residues" evidence="2">
    <location>
        <begin position="51"/>
        <end position="63"/>
    </location>
</feature>
<feature type="compositionally biased region" description="Low complexity" evidence="2">
    <location>
        <begin position="99"/>
        <end position="115"/>
    </location>
</feature>
<feature type="compositionally biased region" description="Low complexity" evidence="2">
    <location>
        <begin position="123"/>
        <end position="171"/>
    </location>
</feature>
<accession>A7ZPL3</accession>